<dbReference type="EMBL" id="CP000939">
    <property type="protein sequence ID" value="ACA46119.1"/>
    <property type="molecule type" value="Genomic_DNA"/>
</dbReference>
<dbReference type="SMR" id="B1IIM6"/>
<dbReference type="KEGG" id="cbb:CLD_2122"/>
<dbReference type="HOGENOM" id="CLU_165326_0_0_9"/>
<dbReference type="Proteomes" id="UP000008541">
    <property type="component" value="Chromosome"/>
</dbReference>
<dbReference type="HAMAP" id="MF_01503">
    <property type="entry name" value="RemA"/>
    <property type="match status" value="1"/>
</dbReference>
<dbReference type="InterPro" id="IPR007169">
    <property type="entry name" value="RemA-like"/>
</dbReference>
<dbReference type="NCBIfam" id="NF046064">
    <property type="entry name" value="MtxBflmRegRemA"/>
    <property type="match status" value="1"/>
</dbReference>
<dbReference type="NCBIfam" id="NF003315">
    <property type="entry name" value="PRK04323.1"/>
    <property type="match status" value="1"/>
</dbReference>
<dbReference type="PANTHER" id="PTHR38449:SF1">
    <property type="entry name" value="REGULATORY PROTEIN SSL2874-RELATED"/>
    <property type="match status" value="1"/>
</dbReference>
<dbReference type="PANTHER" id="PTHR38449">
    <property type="entry name" value="REGULATORY PROTEIN TM_1690-RELATED"/>
    <property type="match status" value="1"/>
</dbReference>
<dbReference type="Pfam" id="PF04025">
    <property type="entry name" value="RemA-like"/>
    <property type="match status" value="1"/>
</dbReference>
<reference key="1">
    <citation type="journal article" date="2007" name="PLoS ONE">
        <title>Analysis of the neurotoxin complex genes in Clostridium botulinum A1-A4 and B1 strains: BoNT/A3, /Ba4 and /B1 clusters are located within plasmids.</title>
        <authorList>
            <person name="Smith T.J."/>
            <person name="Hill K.K."/>
            <person name="Foley B.T."/>
            <person name="Detter J.C."/>
            <person name="Munk A.C."/>
            <person name="Bruce D.C."/>
            <person name="Doggett N.A."/>
            <person name="Smith L.A."/>
            <person name="Marks J.D."/>
            <person name="Xie G."/>
            <person name="Brettin T.S."/>
        </authorList>
    </citation>
    <scope>NUCLEOTIDE SEQUENCE [LARGE SCALE GENOMIC DNA]</scope>
    <source>
        <strain>Okra / Type B1</strain>
    </source>
</reference>
<organism>
    <name type="scientific">Clostridium botulinum (strain Okra / Type B1)</name>
    <dbReference type="NCBI Taxonomy" id="498213"/>
    <lineage>
        <taxon>Bacteria</taxon>
        <taxon>Bacillati</taxon>
        <taxon>Bacillota</taxon>
        <taxon>Clostridia</taxon>
        <taxon>Eubacteriales</taxon>
        <taxon>Clostridiaceae</taxon>
        <taxon>Clostridium</taxon>
    </lineage>
</organism>
<sequence length="91" mass="9965">MAIKLINIGFGNIVSANRLVAIVSPESAPIKRIIQEARDRGMLIDATYGRRTRAVIITDSDHVILSAVQPETVAHRLASKAEEEDINEGEE</sequence>
<feature type="chain" id="PRO_1000198218" description="Putative regulatory protein CLD_2122">
    <location>
        <begin position="1"/>
        <end position="91"/>
    </location>
</feature>
<proteinExistence type="inferred from homology"/>
<evidence type="ECO:0000255" key="1">
    <source>
        <dbReference type="HAMAP-Rule" id="MF_01503"/>
    </source>
</evidence>
<name>Y2122_CLOBK</name>
<accession>B1IIM6</accession>
<comment type="similarity">
    <text evidence="1">Belongs to the RemA family.</text>
</comment>
<gene>
    <name type="ordered locus">CLD_2122</name>
</gene>
<protein>
    <recommendedName>
        <fullName evidence="1">Putative regulatory protein CLD_2122</fullName>
    </recommendedName>
</protein>